<protein>
    <recommendedName>
        <fullName evidence="1">Urease accessory protein UreE</fullName>
    </recommendedName>
</protein>
<dbReference type="EMBL" id="CP000514">
    <property type="protein sequence ID" value="ABM20066.1"/>
    <property type="molecule type" value="Genomic_DNA"/>
</dbReference>
<dbReference type="RefSeq" id="WP_011786434.1">
    <property type="nucleotide sequence ID" value="NC_008740.1"/>
</dbReference>
<dbReference type="SMR" id="A1U4Z7"/>
<dbReference type="STRING" id="351348.Maqu_2992"/>
<dbReference type="KEGG" id="maq:Maqu_2992"/>
<dbReference type="eggNOG" id="COG2371">
    <property type="taxonomic scope" value="Bacteria"/>
</dbReference>
<dbReference type="HOGENOM" id="CLU_093757_2_0_6"/>
<dbReference type="OrthoDB" id="5421304at2"/>
<dbReference type="Proteomes" id="UP000000998">
    <property type="component" value="Chromosome"/>
</dbReference>
<dbReference type="GO" id="GO:0005737">
    <property type="term" value="C:cytoplasm"/>
    <property type="evidence" value="ECO:0007669"/>
    <property type="project" value="UniProtKB-SubCell"/>
</dbReference>
<dbReference type="GO" id="GO:0016151">
    <property type="term" value="F:nickel cation binding"/>
    <property type="evidence" value="ECO:0007669"/>
    <property type="project" value="UniProtKB-UniRule"/>
</dbReference>
<dbReference type="GO" id="GO:0051082">
    <property type="term" value="F:unfolded protein binding"/>
    <property type="evidence" value="ECO:0007669"/>
    <property type="project" value="UniProtKB-UniRule"/>
</dbReference>
<dbReference type="GO" id="GO:0006457">
    <property type="term" value="P:protein folding"/>
    <property type="evidence" value="ECO:0007669"/>
    <property type="project" value="InterPro"/>
</dbReference>
<dbReference type="GO" id="GO:0065003">
    <property type="term" value="P:protein-containing complex assembly"/>
    <property type="evidence" value="ECO:0007669"/>
    <property type="project" value="InterPro"/>
</dbReference>
<dbReference type="GO" id="GO:0019627">
    <property type="term" value="P:urea metabolic process"/>
    <property type="evidence" value="ECO:0007669"/>
    <property type="project" value="InterPro"/>
</dbReference>
<dbReference type="CDD" id="cd00571">
    <property type="entry name" value="UreE"/>
    <property type="match status" value="1"/>
</dbReference>
<dbReference type="Gene3D" id="2.60.260.20">
    <property type="entry name" value="Urease metallochaperone UreE, N-terminal domain"/>
    <property type="match status" value="1"/>
</dbReference>
<dbReference type="Gene3D" id="3.30.70.790">
    <property type="entry name" value="UreE, C-terminal domain"/>
    <property type="match status" value="1"/>
</dbReference>
<dbReference type="HAMAP" id="MF_00822">
    <property type="entry name" value="UreE"/>
    <property type="match status" value="1"/>
</dbReference>
<dbReference type="InterPro" id="IPR012406">
    <property type="entry name" value="UreE"/>
</dbReference>
<dbReference type="InterPro" id="IPR007864">
    <property type="entry name" value="UreE_C_dom"/>
</dbReference>
<dbReference type="InterPro" id="IPR004029">
    <property type="entry name" value="UreE_N"/>
</dbReference>
<dbReference type="InterPro" id="IPR036118">
    <property type="entry name" value="UreE_N_sf"/>
</dbReference>
<dbReference type="NCBIfam" id="NF009751">
    <property type="entry name" value="PRK13261.1-1"/>
    <property type="match status" value="1"/>
</dbReference>
<dbReference type="Pfam" id="PF05194">
    <property type="entry name" value="UreE_C"/>
    <property type="match status" value="1"/>
</dbReference>
<dbReference type="Pfam" id="PF02814">
    <property type="entry name" value="UreE_N"/>
    <property type="match status" value="1"/>
</dbReference>
<dbReference type="PIRSF" id="PIRSF036402">
    <property type="entry name" value="Ureas_acces_UreE"/>
    <property type="match status" value="1"/>
</dbReference>
<dbReference type="SMART" id="SM00988">
    <property type="entry name" value="UreE_N"/>
    <property type="match status" value="1"/>
</dbReference>
<dbReference type="SUPFAM" id="SSF69737">
    <property type="entry name" value="Urease metallochaperone UreE, C-terminal domain"/>
    <property type="match status" value="1"/>
</dbReference>
<dbReference type="SUPFAM" id="SSF69287">
    <property type="entry name" value="Urease metallochaperone UreE, N-terminal domain"/>
    <property type="match status" value="1"/>
</dbReference>
<reference key="1">
    <citation type="journal article" date="2011" name="Appl. Environ. Microbiol.">
        <title>Genomic potential of Marinobacter aquaeolei, a biogeochemical 'opportunitroph'.</title>
        <authorList>
            <person name="Singer E."/>
            <person name="Webb E.A."/>
            <person name="Nelson W.C."/>
            <person name="Heidelberg J.F."/>
            <person name="Ivanova N."/>
            <person name="Pati A."/>
            <person name="Edwards K.J."/>
        </authorList>
    </citation>
    <scope>NUCLEOTIDE SEQUENCE [LARGE SCALE GENOMIC DNA]</scope>
    <source>
        <strain>ATCC 700491 / DSM 11845 / VT8</strain>
    </source>
</reference>
<name>UREE_MARN8</name>
<accession>A1U4Z7</accession>
<organism>
    <name type="scientific">Marinobacter nauticus (strain ATCC 700491 / DSM 11845 / VT8)</name>
    <name type="common">Marinobacter aquaeolei</name>
    <dbReference type="NCBI Taxonomy" id="351348"/>
    <lineage>
        <taxon>Bacteria</taxon>
        <taxon>Pseudomonadati</taxon>
        <taxon>Pseudomonadota</taxon>
        <taxon>Gammaproteobacteria</taxon>
        <taxon>Pseudomonadales</taxon>
        <taxon>Marinobacteraceae</taxon>
        <taxon>Marinobacter</taxon>
    </lineage>
</organism>
<evidence type="ECO:0000255" key="1">
    <source>
        <dbReference type="HAMAP-Rule" id="MF_00822"/>
    </source>
</evidence>
<evidence type="ECO:0000256" key="2">
    <source>
        <dbReference type="SAM" id="MobiDB-lite"/>
    </source>
</evidence>
<gene>
    <name evidence="1" type="primary">ureE</name>
    <name type="ordered locus">Maqu_2992</name>
</gene>
<feature type="chain" id="PRO_1000083895" description="Urease accessory protein UreE">
    <location>
        <begin position="1"/>
        <end position="181"/>
    </location>
</feature>
<feature type="region of interest" description="Disordered" evidence="2">
    <location>
        <begin position="143"/>
        <end position="181"/>
    </location>
</feature>
<proteinExistence type="inferred from homology"/>
<comment type="function">
    <text evidence="1">Involved in urease metallocenter assembly. Binds nickel. Probably functions as a nickel donor during metallocenter assembly.</text>
</comment>
<comment type="subcellular location">
    <subcellularLocation>
        <location evidence="1">Cytoplasm</location>
    </subcellularLocation>
</comment>
<comment type="similarity">
    <text evidence="1">Belongs to the UreE family.</text>
</comment>
<sequence length="181" mass="20050">MLELTKRITHVDASEIHDNLVLPYELRIRGRLRATTETNLDVGLFLDRGPVLRDGDLLEAKSGEIIRIRAAEEPVVTARVETGLPLARLCYHLGNRHVSLQIGSGGAIGEDDRMGWVRFPPDHVLEELAERLGATVVHHTATFDPEPGAYNQAGQGHSHGHSHGHSHNHDHEHSHGHKHAH</sequence>
<keyword id="KW-0143">Chaperone</keyword>
<keyword id="KW-0963">Cytoplasm</keyword>
<keyword id="KW-0533">Nickel</keyword>
<keyword id="KW-0996">Nickel insertion</keyword>